<name>KTI1_SOYBN</name>
<proteinExistence type="evidence at transcript level"/>
<feature type="signal peptide" evidence="2">
    <location>
        <begin position="1"/>
        <end position="25"/>
    </location>
</feature>
<feature type="chain" id="PRO_0000016891" description="Kunitz-type trypsin inhibitor KTI1">
    <location>
        <begin position="26"/>
        <end position="203"/>
    </location>
</feature>
<feature type="disulfide bond" evidence="1">
    <location>
        <begin position="65"/>
        <end position="112"/>
    </location>
</feature>
<feature type="disulfide bond" evidence="1">
    <location>
        <begin position="159"/>
        <end position="168"/>
    </location>
</feature>
<protein>
    <recommendedName>
        <fullName>Kunitz-type trypsin inhibitor KTI1</fullName>
    </recommendedName>
</protein>
<comment type="function">
    <text>Has probably no trypsin inhibitor activity. KTi3 is responsible for most of the Kunitz trypsin inhibitor activity and protein found in soybean seeds.</text>
</comment>
<comment type="tissue specificity">
    <text>Seed, and at low levels in leaf, root, and stem.</text>
</comment>
<comment type="developmental stage">
    <text>Expressed during embryogenesis and in mature plant.</text>
</comment>
<comment type="similarity">
    <text evidence="3">Belongs to the protease inhibitor I3 (leguminous Kunitz-type inhibitor) family.</text>
</comment>
<accession>P25272</accession>
<evidence type="ECO:0000250" key="1"/>
<evidence type="ECO:0000255" key="2"/>
<evidence type="ECO:0000305" key="3"/>
<organism>
    <name type="scientific">Glycine max</name>
    <name type="common">Soybean</name>
    <name type="synonym">Glycine hispida</name>
    <dbReference type="NCBI Taxonomy" id="3847"/>
    <lineage>
        <taxon>Eukaryota</taxon>
        <taxon>Viridiplantae</taxon>
        <taxon>Streptophyta</taxon>
        <taxon>Embryophyta</taxon>
        <taxon>Tracheophyta</taxon>
        <taxon>Spermatophyta</taxon>
        <taxon>Magnoliopsida</taxon>
        <taxon>eudicotyledons</taxon>
        <taxon>Gunneridae</taxon>
        <taxon>Pentapetalae</taxon>
        <taxon>rosids</taxon>
        <taxon>fabids</taxon>
        <taxon>Fabales</taxon>
        <taxon>Fabaceae</taxon>
        <taxon>Papilionoideae</taxon>
        <taxon>50 kb inversion clade</taxon>
        <taxon>NPAAA clade</taxon>
        <taxon>indigoferoid/millettioid clade</taxon>
        <taxon>Phaseoleae</taxon>
        <taxon>Glycine</taxon>
        <taxon>Glycine subgen. Soja</taxon>
    </lineage>
</organism>
<reference key="1">
    <citation type="journal article" date="1989" name="Plant Cell">
        <title>Kunitz trypsin inhibitor genes are differentially expressed during the soybean life cycle and in transformed tobacco plants.</title>
        <authorList>
            <person name="Jofuku K.D."/>
            <person name="Goldberg R.B."/>
        </authorList>
    </citation>
    <scope>NUCLEOTIDE SEQUENCE [GENOMIC DNA]</scope>
    <source>
        <strain>cv. Forrest</strain>
    </source>
</reference>
<gene>
    <name type="primary">KTI1</name>
</gene>
<keyword id="KW-1015">Disulfide bond</keyword>
<keyword id="KW-0646">Protease inhibitor</keyword>
<keyword id="KW-1185">Reference proteome</keyword>
<keyword id="KW-0722">Serine protease inhibitor</keyword>
<keyword id="KW-0732">Signal</keyword>
<sequence length="203" mass="22546">MKSTIFFALFLVCAFTISYLPSATAQFVLDTDDDPLQNGGTYYMLPVMRGKGGGIEVDSTGKEICPLTVVQSPNELDKGIGLVFTSPLHALFIAERYPLSIKFGSFAVITLCAGMPTEWAIVEREGLQAVKLAARDTVDGWFNIERVSREYNDYKLVFCPQQAEDNKCEDIGIQIDDDGIRRLVLSKNKPLVVQFQKFRSSTA</sequence>
<dbReference type="EMBL" id="S45035">
    <property type="protein sequence ID" value="AAB23482.1"/>
    <property type="molecule type" value="Genomic_DNA"/>
</dbReference>
<dbReference type="PIR" id="JQ1091">
    <property type="entry name" value="JQ1091"/>
</dbReference>
<dbReference type="SMR" id="P25272"/>
<dbReference type="STRING" id="3847.P25272"/>
<dbReference type="MEROPS" id="I03.001"/>
<dbReference type="PaxDb" id="3847-GLYMA01G10900.1"/>
<dbReference type="InParanoid" id="P25272"/>
<dbReference type="Proteomes" id="UP000008827">
    <property type="component" value="Unplaced"/>
</dbReference>
<dbReference type="GO" id="GO:0004867">
    <property type="term" value="F:serine-type endopeptidase inhibitor activity"/>
    <property type="evidence" value="ECO:0007669"/>
    <property type="project" value="UniProtKB-KW"/>
</dbReference>
<dbReference type="CDD" id="cd23363">
    <property type="entry name" value="beta-trefoil_STI_SKTI"/>
    <property type="match status" value="1"/>
</dbReference>
<dbReference type="Gene3D" id="2.80.10.50">
    <property type="match status" value="1"/>
</dbReference>
<dbReference type="InterPro" id="IPR011065">
    <property type="entry name" value="Kunitz_inhibitor_STI-like_sf"/>
</dbReference>
<dbReference type="InterPro" id="IPR002160">
    <property type="entry name" value="Prot_inh_Kunz-lg"/>
</dbReference>
<dbReference type="PANTHER" id="PTHR33107">
    <property type="entry name" value="KUNITZ TRYPSIN INHIBITOR 2"/>
    <property type="match status" value="1"/>
</dbReference>
<dbReference type="PANTHER" id="PTHR33107:SF81">
    <property type="entry name" value="TRYPSIN INHIBITOR A"/>
    <property type="match status" value="1"/>
</dbReference>
<dbReference type="Pfam" id="PF00197">
    <property type="entry name" value="Kunitz_legume"/>
    <property type="match status" value="1"/>
</dbReference>
<dbReference type="PRINTS" id="PR00291">
    <property type="entry name" value="KUNITZINHBTR"/>
</dbReference>
<dbReference type="SMART" id="SM00452">
    <property type="entry name" value="STI"/>
    <property type="match status" value="1"/>
</dbReference>
<dbReference type="SUPFAM" id="SSF50386">
    <property type="entry name" value="STI-like"/>
    <property type="match status" value="1"/>
</dbReference>
<dbReference type="PROSITE" id="PS00283">
    <property type="entry name" value="SOYBEAN_KUNITZ"/>
    <property type="match status" value="1"/>
</dbReference>